<proteinExistence type="inferred from homology"/>
<accession>Q12ZG3</accession>
<sequence>MGNIRQTHIKNIAFRLVENYGDVFTTDFDKNKLLVSQYTTIEGKVIRNRVAGYVTRKIRYPKLI</sequence>
<keyword id="KW-0687">Ribonucleoprotein</keyword>
<keyword id="KW-0689">Ribosomal protein</keyword>
<name>RS17E_METBU</name>
<organism>
    <name type="scientific">Methanococcoides burtonii (strain DSM 6242 / NBRC 107633 / OCM 468 / ACE-M)</name>
    <dbReference type="NCBI Taxonomy" id="259564"/>
    <lineage>
        <taxon>Archaea</taxon>
        <taxon>Methanobacteriati</taxon>
        <taxon>Methanobacteriota</taxon>
        <taxon>Stenosarchaea group</taxon>
        <taxon>Methanomicrobia</taxon>
        <taxon>Methanosarcinales</taxon>
        <taxon>Methanosarcinaceae</taxon>
        <taxon>Methanococcoides</taxon>
    </lineage>
</organism>
<protein>
    <recommendedName>
        <fullName evidence="1">Small ribosomal subunit protein eS17</fullName>
    </recommendedName>
    <alternativeName>
        <fullName evidence="2">30S ribosomal protein S17e</fullName>
    </alternativeName>
</protein>
<evidence type="ECO:0000255" key="1">
    <source>
        <dbReference type="HAMAP-Rule" id="MF_00511"/>
    </source>
</evidence>
<evidence type="ECO:0000305" key="2"/>
<dbReference type="EMBL" id="CP000300">
    <property type="protein sequence ID" value="ABE51163.1"/>
    <property type="molecule type" value="Genomic_DNA"/>
</dbReference>
<dbReference type="RefSeq" id="WP_011498327.1">
    <property type="nucleotide sequence ID" value="NC_007955.1"/>
</dbReference>
<dbReference type="SMR" id="Q12ZG3"/>
<dbReference type="STRING" id="259564.Mbur_0146"/>
<dbReference type="GeneID" id="3998412"/>
<dbReference type="KEGG" id="mbu:Mbur_0146"/>
<dbReference type="HOGENOM" id="CLU_176720_1_0_2"/>
<dbReference type="OrthoDB" id="52479at2157"/>
<dbReference type="Proteomes" id="UP000001979">
    <property type="component" value="Chromosome"/>
</dbReference>
<dbReference type="GO" id="GO:1990904">
    <property type="term" value="C:ribonucleoprotein complex"/>
    <property type="evidence" value="ECO:0007669"/>
    <property type="project" value="UniProtKB-KW"/>
</dbReference>
<dbReference type="GO" id="GO:0005840">
    <property type="term" value="C:ribosome"/>
    <property type="evidence" value="ECO:0007669"/>
    <property type="project" value="UniProtKB-KW"/>
</dbReference>
<dbReference type="GO" id="GO:0003735">
    <property type="term" value="F:structural constituent of ribosome"/>
    <property type="evidence" value="ECO:0007669"/>
    <property type="project" value="InterPro"/>
</dbReference>
<dbReference type="GO" id="GO:0006412">
    <property type="term" value="P:translation"/>
    <property type="evidence" value="ECO:0007669"/>
    <property type="project" value="UniProtKB-UniRule"/>
</dbReference>
<dbReference type="Gene3D" id="1.10.60.20">
    <property type="entry name" value="Ribosomal protein S17e-like"/>
    <property type="match status" value="1"/>
</dbReference>
<dbReference type="HAMAP" id="MF_00511">
    <property type="entry name" value="Ribosomal_eS17"/>
    <property type="match status" value="1"/>
</dbReference>
<dbReference type="InterPro" id="IPR001210">
    <property type="entry name" value="Ribosomal_eS17"/>
</dbReference>
<dbReference type="InterPro" id="IPR036401">
    <property type="entry name" value="Ribosomal_eS17_sf"/>
</dbReference>
<dbReference type="NCBIfam" id="NF002242">
    <property type="entry name" value="PRK01151.1"/>
    <property type="match status" value="1"/>
</dbReference>
<dbReference type="PANTHER" id="PTHR10732">
    <property type="entry name" value="40S RIBOSOMAL PROTEIN S17"/>
    <property type="match status" value="1"/>
</dbReference>
<dbReference type="PANTHER" id="PTHR10732:SF0">
    <property type="entry name" value="40S RIBOSOMAL PROTEIN S17"/>
    <property type="match status" value="1"/>
</dbReference>
<dbReference type="Pfam" id="PF00833">
    <property type="entry name" value="Ribosomal_S17e"/>
    <property type="match status" value="1"/>
</dbReference>
<dbReference type="SUPFAM" id="SSF116820">
    <property type="entry name" value="Rps17e-like"/>
    <property type="match status" value="1"/>
</dbReference>
<feature type="chain" id="PRO_0000258600" description="Small ribosomal subunit protein eS17">
    <location>
        <begin position="1"/>
        <end position="64"/>
    </location>
</feature>
<gene>
    <name evidence="1" type="primary">rps17e</name>
    <name type="ordered locus">Mbur_0146</name>
</gene>
<reference key="1">
    <citation type="journal article" date="2009" name="ISME J.">
        <title>The genome sequence of the psychrophilic archaeon, Methanococcoides burtonii: the role of genome evolution in cold adaptation.</title>
        <authorList>
            <person name="Allen M.A."/>
            <person name="Lauro F.M."/>
            <person name="Williams T.J."/>
            <person name="Burg D."/>
            <person name="Siddiqui K.S."/>
            <person name="De Francisci D."/>
            <person name="Chong K.W."/>
            <person name="Pilak O."/>
            <person name="Chew H.H."/>
            <person name="De Maere M.Z."/>
            <person name="Ting L."/>
            <person name="Katrib M."/>
            <person name="Ng C."/>
            <person name="Sowers K.R."/>
            <person name="Galperin M.Y."/>
            <person name="Anderson I.J."/>
            <person name="Ivanova N."/>
            <person name="Dalin E."/>
            <person name="Martinez M."/>
            <person name="Lapidus A."/>
            <person name="Hauser L."/>
            <person name="Land M."/>
            <person name="Thomas T."/>
            <person name="Cavicchioli R."/>
        </authorList>
    </citation>
    <scope>NUCLEOTIDE SEQUENCE [LARGE SCALE GENOMIC DNA]</scope>
    <source>
        <strain>DSM 6242 / NBRC 107633 / OCM 468 / ACE-M</strain>
    </source>
</reference>
<comment type="similarity">
    <text evidence="1">Belongs to the eukaryotic ribosomal protein eS17 family.</text>
</comment>